<comment type="function">
    <text evidence="1">Exhibits GTPase activity. Binds RNA but is probably not involved in ribosome assembly in mycobacteria.</text>
</comment>
<comment type="subunit">
    <text evidence="1">Monomer.</text>
</comment>
<comment type="subcellular location">
    <subcellularLocation>
        <location evidence="1">Cell envelope</location>
    </subcellularLocation>
    <subcellularLocation>
        <location evidence="1">Secreted</location>
        <location evidence="1">Cell wall</location>
    </subcellularLocation>
</comment>
<comment type="similarity">
    <text evidence="1">Belongs to the TRAFAC class TrmE-Era-EngA-EngB-Septin-like GTPase superfamily. Era GTPase family.</text>
</comment>
<dbReference type="EMBL" id="CP000384">
    <property type="protein sequence ID" value="ABG09559.1"/>
    <property type="molecule type" value="Genomic_DNA"/>
</dbReference>
<dbReference type="SMR" id="Q1B6C5"/>
<dbReference type="KEGG" id="mmc:Mmcs_3452"/>
<dbReference type="HOGENOM" id="CLU_038009_0_2_11"/>
<dbReference type="BioCyc" id="MSP164756:G1G6O-3522-MONOMER"/>
<dbReference type="GO" id="GO:0030313">
    <property type="term" value="C:cell envelope"/>
    <property type="evidence" value="ECO:0007669"/>
    <property type="project" value="UniProtKB-SubCell"/>
</dbReference>
<dbReference type="GO" id="GO:0005829">
    <property type="term" value="C:cytosol"/>
    <property type="evidence" value="ECO:0007669"/>
    <property type="project" value="TreeGrafter"/>
</dbReference>
<dbReference type="GO" id="GO:0005576">
    <property type="term" value="C:extracellular region"/>
    <property type="evidence" value="ECO:0007669"/>
    <property type="project" value="UniProtKB-KW"/>
</dbReference>
<dbReference type="GO" id="GO:0005525">
    <property type="term" value="F:GTP binding"/>
    <property type="evidence" value="ECO:0007669"/>
    <property type="project" value="UniProtKB-UniRule"/>
</dbReference>
<dbReference type="GO" id="GO:0003924">
    <property type="term" value="F:GTPase activity"/>
    <property type="evidence" value="ECO:0007669"/>
    <property type="project" value="UniProtKB-UniRule"/>
</dbReference>
<dbReference type="GO" id="GO:0043024">
    <property type="term" value="F:ribosomal small subunit binding"/>
    <property type="evidence" value="ECO:0007669"/>
    <property type="project" value="TreeGrafter"/>
</dbReference>
<dbReference type="GO" id="GO:0019843">
    <property type="term" value="F:rRNA binding"/>
    <property type="evidence" value="ECO:0007669"/>
    <property type="project" value="TreeGrafter"/>
</dbReference>
<dbReference type="GO" id="GO:0000028">
    <property type="term" value="P:ribosomal small subunit assembly"/>
    <property type="evidence" value="ECO:0007669"/>
    <property type="project" value="TreeGrafter"/>
</dbReference>
<dbReference type="CDD" id="cd04163">
    <property type="entry name" value="Era"/>
    <property type="match status" value="1"/>
</dbReference>
<dbReference type="CDD" id="cd22534">
    <property type="entry name" value="KH-II_Era"/>
    <property type="match status" value="1"/>
</dbReference>
<dbReference type="FunFam" id="3.30.300.20:FF:000003">
    <property type="entry name" value="GTPase Era"/>
    <property type="match status" value="1"/>
</dbReference>
<dbReference type="FunFam" id="3.40.50.300:FF:000094">
    <property type="entry name" value="GTPase Era"/>
    <property type="match status" value="1"/>
</dbReference>
<dbReference type="Gene3D" id="3.30.300.20">
    <property type="match status" value="1"/>
</dbReference>
<dbReference type="Gene3D" id="3.40.50.300">
    <property type="entry name" value="P-loop containing nucleotide triphosphate hydrolases"/>
    <property type="match status" value="1"/>
</dbReference>
<dbReference type="HAMAP" id="MF_00367">
    <property type="entry name" value="GTPase_Era"/>
    <property type="match status" value="1"/>
</dbReference>
<dbReference type="InterPro" id="IPR030388">
    <property type="entry name" value="G_ERA_dom"/>
</dbReference>
<dbReference type="InterPro" id="IPR006073">
    <property type="entry name" value="GTP-bd"/>
</dbReference>
<dbReference type="InterPro" id="IPR005662">
    <property type="entry name" value="GTPase_Era-like"/>
</dbReference>
<dbReference type="InterPro" id="IPR015946">
    <property type="entry name" value="KH_dom-like_a/b"/>
</dbReference>
<dbReference type="InterPro" id="IPR004044">
    <property type="entry name" value="KH_dom_type_2"/>
</dbReference>
<dbReference type="InterPro" id="IPR009019">
    <property type="entry name" value="KH_sf_prok-type"/>
</dbReference>
<dbReference type="InterPro" id="IPR027417">
    <property type="entry name" value="P-loop_NTPase"/>
</dbReference>
<dbReference type="InterPro" id="IPR005225">
    <property type="entry name" value="Small_GTP-bd"/>
</dbReference>
<dbReference type="NCBIfam" id="TIGR00436">
    <property type="entry name" value="era"/>
    <property type="match status" value="1"/>
</dbReference>
<dbReference type="NCBIfam" id="NF000908">
    <property type="entry name" value="PRK00089.1"/>
    <property type="match status" value="1"/>
</dbReference>
<dbReference type="NCBIfam" id="TIGR00231">
    <property type="entry name" value="small_GTP"/>
    <property type="match status" value="1"/>
</dbReference>
<dbReference type="PANTHER" id="PTHR42698">
    <property type="entry name" value="GTPASE ERA"/>
    <property type="match status" value="1"/>
</dbReference>
<dbReference type="PANTHER" id="PTHR42698:SF1">
    <property type="entry name" value="GTPASE ERA, MITOCHONDRIAL"/>
    <property type="match status" value="1"/>
</dbReference>
<dbReference type="Pfam" id="PF07650">
    <property type="entry name" value="KH_2"/>
    <property type="match status" value="1"/>
</dbReference>
<dbReference type="Pfam" id="PF01926">
    <property type="entry name" value="MMR_HSR1"/>
    <property type="match status" value="1"/>
</dbReference>
<dbReference type="PRINTS" id="PR00326">
    <property type="entry name" value="GTP1OBG"/>
</dbReference>
<dbReference type="SUPFAM" id="SSF52540">
    <property type="entry name" value="P-loop containing nucleoside triphosphate hydrolases"/>
    <property type="match status" value="1"/>
</dbReference>
<dbReference type="SUPFAM" id="SSF54814">
    <property type="entry name" value="Prokaryotic type KH domain (KH-domain type II)"/>
    <property type="match status" value="1"/>
</dbReference>
<dbReference type="PROSITE" id="PS51713">
    <property type="entry name" value="G_ERA"/>
    <property type="match status" value="1"/>
</dbReference>
<dbReference type="PROSITE" id="PS50823">
    <property type="entry name" value="KH_TYPE_2"/>
    <property type="match status" value="1"/>
</dbReference>
<proteinExistence type="inferred from homology"/>
<name>ERA_MYCSS</name>
<accession>Q1B6C5</accession>
<organism>
    <name type="scientific">Mycobacterium sp. (strain MCS)</name>
    <dbReference type="NCBI Taxonomy" id="164756"/>
    <lineage>
        <taxon>Bacteria</taxon>
        <taxon>Bacillati</taxon>
        <taxon>Actinomycetota</taxon>
        <taxon>Actinomycetes</taxon>
        <taxon>Mycobacteriales</taxon>
        <taxon>Mycobacteriaceae</taxon>
        <taxon>Mycobacterium</taxon>
    </lineage>
</organism>
<gene>
    <name evidence="1" type="primary">era</name>
    <name type="ordered locus">Mmcs_3452</name>
</gene>
<feature type="chain" id="PRO_1000079714" description="GTPase Era">
    <location>
        <begin position="1"/>
        <end position="299"/>
    </location>
</feature>
<feature type="domain" description="Era-type G" evidence="2">
    <location>
        <begin position="5"/>
        <end position="175"/>
    </location>
</feature>
<feature type="domain" description="KH type-2" evidence="1">
    <location>
        <begin position="206"/>
        <end position="285"/>
    </location>
</feature>
<feature type="region of interest" description="G1" evidence="2">
    <location>
        <begin position="13"/>
        <end position="20"/>
    </location>
</feature>
<feature type="region of interest" description="G2" evidence="2">
    <location>
        <begin position="39"/>
        <end position="43"/>
    </location>
</feature>
<feature type="region of interest" description="G3" evidence="2">
    <location>
        <begin position="60"/>
        <end position="63"/>
    </location>
</feature>
<feature type="region of interest" description="G4" evidence="2">
    <location>
        <begin position="124"/>
        <end position="127"/>
    </location>
</feature>
<feature type="region of interest" description="G5" evidence="2">
    <location>
        <begin position="154"/>
        <end position="156"/>
    </location>
</feature>
<feature type="binding site" evidence="1">
    <location>
        <begin position="13"/>
        <end position="20"/>
    </location>
    <ligand>
        <name>GTP</name>
        <dbReference type="ChEBI" id="CHEBI:37565"/>
    </ligand>
</feature>
<feature type="binding site" evidence="1">
    <location>
        <begin position="60"/>
        <end position="64"/>
    </location>
    <ligand>
        <name>GTP</name>
        <dbReference type="ChEBI" id="CHEBI:37565"/>
    </ligand>
</feature>
<feature type="binding site" evidence="1">
    <location>
        <begin position="124"/>
        <end position="127"/>
    </location>
    <ligand>
        <name>GTP</name>
        <dbReference type="ChEBI" id="CHEBI:37565"/>
    </ligand>
</feature>
<reference key="1">
    <citation type="submission" date="2006-06" db="EMBL/GenBank/DDBJ databases">
        <title>Complete sequence of chromosome of Mycobacterium sp. MCS.</title>
        <authorList>
            <consortium name="US DOE Joint Genome Institute"/>
            <person name="Copeland A."/>
            <person name="Lucas S."/>
            <person name="Lapidus A."/>
            <person name="Barry K."/>
            <person name="Detter J.C."/>
            <person name="Glavina del Rio T."/>
            <person name="Hammon N."/>
            <person name="Israni S."/>
            <person name="Dalin E."/>
            <person name="Tice H."/>
            <person name="Pitluck S."/>
            <person name="Martinez M."/>
            <person name="Schmutz J."/>
            <person name="Larimer F."/>
            <person name="Land M."/>
            <person name="Hauser L."/>
            <person name="Kyrpides N."/>
            <person name="Kim E."/>
            <person name="Miller C.D."/>
            <person name="Hughes J.E."/>
            <person name="Anderson A.J."/>
            <person name="Sims R.C."/>
            <person name="Richardson P."/>
        </authorList>
    </citation>
    <scope>NUCLEOTIDE SEQUENCE [LARGE SCALE GENOMIC DNA]</scope>
    <source>
        <strain>MCS</strain>
    </source>
</reference>
<keyword id="KW-0134">Cell wall</keyword>
<keyword id="KW-0342">GTP-binding</keyword>
<keyword id="KW-0547">Nucleotide-binding</keyword>
<keyword id="KW-0694">RNA-binding</keyword>
<keyword id="KW-0964">Secreted</keyword>
<evidence type="ECO:0000255" key="1">
    <source>
        <dbReference type="HAMAP-Rule" id="MF_00367"/>
    </source>
</evidence>
<evidence type="ECO:0000255" key="2">
    <source>
        <dbReference type="PROSITE-ProRule" id="PRU01050"/>
    </source>
</evidence>
<protein>
    <recommendedName>
        <fullName evidence="1">GTPase Era</fullName>
    </recommendedName>
</protein>
<sequence>MSEFRSGFVCFVGRPNTGKSTLTNALVGTKVAITSNRPQTTRHTIRGIVHRDEFQIILVDTPGLHRPRTLLGQRLNDLVKTTYSEVDVIGLCIPADEAIGPGDRWIHEQIRAVAPRTTLVVIVTKIDKVPRDRVAAQLMAVSELVGPDAEIVPVSATTGEQLDVLTDVLAGKLPPGPAFYPDGELTDEPEETLMAELIREAALEGVRDELPHSLAVVIDEVSPREDRDDLIDVHAILYVERDSQKGIVIGKGGARLREVGTAARLQIEKLLGTKVYLDLRVKIAKNWQRDPKQLGRLGF</sequence>